<accession>P47486</accession>
<name>UVRD_MYCGE</name>
<dbReference type="EC" id="5.6.2.4"/>
<dbReference type="EMBL" id="L43967">
    <property type="protein sequence ID" value="AAC71464.1"/>
    <property type="molecule type" value="Genomic_DNA"/>
</dbReference>
<dbReference type="EMBL" id="X61517">
    <property type="protein sequence ID" value="CAA43729.1"/>
    <property type="molecule type" value="Genomic_DNA"/>
</dbReference>
<dbReference type="PIR" id="I64226">
    <property type="entry name" value="I64226"/>
</dbReference>
<dbReference type="RefSeq" id="WP_010869390.1">
    <property type="nucleotide sequence ID" value="NC_000908.2"/>
</dbReference>
<dbReference type="SMR" id="P47486"/>
<dbReference type="FunCoup" id="P47486">
    <property type="interactions" value="215"/>
</dbReference>
<dbReference type="STRING" id="243273.MG_244"/>
<dbReference type="GeneID" id="88282390"/>
<dbReference type="KEGG" id="mge:MG_244"/>
<dbReference type="eggNOG" id="COG0210">
    <property type="taxonomic scope" value="Bacteria"/>
</dbReference>
<dbReference type="HOGENOM" id="CLU_004585_6_1_14"/>
<dbReference type="InParanoid" id="P47486"/>
<dbReference type="OrthoDB" id="9810135at2"/>
<dbReference type="BioCyc" id="MGEN243273:G1GJ2-291-MONOMER"/>
<dbReference type="Proteomes" id="UP000000807">
    <property type="component" value="Chromosome"/>
</dbReference>
<dbReference type="GO" id="GO:0005829">
    <property type="term" value="C:cytosol"/>
    <property type="evidence" value="ECO:0000318"/>
    <property type="project" value="GO_Central"/>
</dbReference>
<dbReference type="GO" id="GO:0033202">
    <property type="term" value="C:DNA helicase complex"/>
    <property type="evidence" value="ECO:0000318"/>
    <property type="project" value="GO_Central"/>
</dbReference>
<dbReference type="GO" id="GO:0043138">
    <property type="term" value="F:3'-5' DNA helicase activity"/>
    <property type="evidence" value="ECO:0000318"/>
    <property type="project" value="GO_Central"/>
</dbReference>
<dbReference type="GO" id="GO:0005524">
    <property type="term" value="F:ATP binding"/>
    <property type="evidence" value="ECO:0007669"/>
    <property type="project" value="UniProtKB-KW"/>
</dbReference>
<dbReference type="GO" id="GO:0016887">
    <property type="term" value="F:ATP hydrolysis activity"/>
    <property type="evidence" value="ECO:0007669"/>
    <property type="project" value="RHEA"/>
</dbReference>
<dbReference type="GO" id="GO:0003677">
    <property type="term" value="F:DNA binding"/>
    <property type="evidence" value="ECO:0007669"/>
    <property type="project" value="UniProtKB-KW"/>
</dbReference>
<dbReference type="GO" id="GO:0006260">
    <property type="term" value="P:DNA replication"/>
    <property type="evidence" value="ECO:0007669"/>
    <property type="project" value="UniProtKB-KW"/>
</dbReference>
<dbReference type="GO" id="GO:0000725">
    <property type="term" value="P:recombinational repair"/>
    <property type="evidence" value="ECO:0000318"/>
    <property type="project" value="GO_Central"/>
</dbReference>
<dbReference type="CDD" id="cd17932">
    <property type="entry name" value="DEXQc_UvrD"/>
    <property type="match status" value="1"/>
</dbReference>
<dbReference type="CDD" id="cd18807">
    <property type="entry name" value="SF1_C_UvrD"/>
    <property type="match status" value="1"/>
</dbReference>
<dbReference type="FunFam" id="3.40.50.300:FF:005339">
    <property type="entry name" value="Probable DNA helicase II homolog"/>
    <property type="match status" value="1"/>
</dbReference>
<dbReference type="Gene3D" id="1.10.10.160">
    <property type="match status" value="1"/>
</dbReference>
<dbReference type="Gene3D" id="3.40.50.300">
    <property type="entry name" value="P-loop containing nucleotide triphosphate hydrolases"/>
    <property type="match status" value="3"/>
</dbReference>
<dbReference type="InterPro" id="IPR013986">
    <property type="entry name" value="DExx_box_DNA_helicase_dom_sf"/>
</dbReference>
<dbReference type="InterPro" id="IPR014017">
    <property type="entry name" value="DNA_helicase_UvrD-like_C"/>
</dbReference>
<dbReference type="InterPro" id="IPR000212">
    <property type="entry name" value="DNA_helicase_UvrD/REP"/>
</dbReference>
<dbReference type="InterPro" id="IPR027417">
    <property type="entry name" value="P-loop_NTPase"/>
</dbReference>
<dbReference type="InterPro" id="IPR014016">
    <property type="entry name" value="UvrD-like_ATP-bd"/>
</dbReference>
<dbReference type="PANTHER" id="PTHR11070:SF2">
    <property type="entry name" value="ATP-DEPENDENT DNA HELICASE SRS2"/>
    <property type="match status" value="1"/>
</dbReference>
<dbReference type="PANTHER" id="PTHR11070">
    <property type="entry name" value="UVRD / RECB / PCRA DNA HELICASE FAMILY MEMBER"/>
    <property type="match status" value="1"/>
</dbReference>
<dbReference type="Pfam" id="PF00580">
    <property type="entry name" value="UvrD-helicase"/>
    <property type="match status" value="1"/>
</dbReference>
<dbReference type="Pfam" id="PF13361">
    <property type="entry name" value="UvrD_C"/>
    <property type="match status" value="1"/>
</dbReference>
<dbReference type="SUPFAM" id="SSF52540">
    <property type="entry name" value="P-loop containing nucleoside triphosphate hydrolases"/>
    <property type="match status" value="1"/>
</dbReference>
<dbReference type="PROSITE" id="PS51198">
    <property type="entry name" value="UVRD_HELICASE_ATP_BIND"/>
    <property type="match status" value="1"/>
</dbReference>
<dbReference type="PROSITE" id="PS51217">
    <property type="entry name" value="UVRD_HELICASE_CTER"/>
    <property type="match status" value="1"/>
</dbReference>
<protein>
    <recommendedName>
        <fullName>Probable DNA helicase II homolog</fullName>
        <ecNumber>5.6.2.4</ecNumber>
    </recommendedName>
    <alternativeName>
        <fullName evidence="4">DNA 3'-5' helicase II</fullName>
    </alternativeName>
</protein>
<reference key="1">
    <citation type="journal article" date="1995" name="Science">
        <title>The minimal gene complement of Mycoplasma genitalium.</title>
        <authorList>
            <person name="Fraser C.M."/>
            <person name="Gocayne J.D."/>
            <person name="White O."/>
            <person name="Adams M.D."/>
            <person name="Clayton R.A."/>
            <person name="Fleischmann R.D."/>
            <person name="Bult C.J."/>
            <person name="Kerlavage A.R."/>
            <person name="Sutton G.G."/>
            <person name="Kelley J.M."/>
            <person name="Fritchman J.L."/>
            <person name="Weidman J.F."/>
            <person name="Small K.V."/>
            <person name="Sandusky M."/>
            <person name="Fuhrmann J.L."/>
            <person name="Nguyen D.T."/>
            <person name="Utterback T.R."/>
            <person name="Saudek D.M."/>
            <person name="Phillips C.A."/>
            <person name="Merrick J.M."/>
            <person name="Tomb J.-F."/>
            <person name="Dougherty B.A."/>
            <person name="Bott K.F."/>
            <person name="Hu P.-C."/>
            <person name="Lucier T.S."/>
            <person name="Peterson S.N."/>
            <person name="Smith H.O."/>
            <person name="Hutchison C.A. III"/>
            <person name="Venter J.C."/>
        </authorList>
    </citation>
    <scope>NUCLEOTIDE SEQUENCE [LARGE SCALE GENOMIC DNA]</scope>
    <source>
        <strain>ATCC 33530 / DSM 19775 / NCTC 10195 / G37</strain>
    </source>
</reference>
<reference key="2">
    <citation type="journal article" date="1991" name="Nucleic Acids Res.">
        <title>A random sequencing approach for placing markers on the physical map of Mycoplasma genitalium.</title>
        <authorList>
            <person name="Peterson S.N."/>
            <person name="Schramm N."/>
            <person name="Hu P.-C."/>
            <person name="Bott K.F."/>
            <person name="Hutchison C.A. III"/>
        </authorList>
    </citation>
    <scope>NUCLEOTIDE SEQUENCE [GENOMIC DNA] OF 277-345</scope>
    <source>
        <strain>ATCC 33530 / DSM 19775 / NCTC 10195 / G37</strain>
    </source>
</reference>
<keyword id="KW-0067">ATP-binding</keyword>
<keyword id="KW-0227">DNA damage</keyword>
<keyword id="KW-0234">DNA repair</keyword>
<keyword id="KW-0235">DNA replication</keyword>
<keyword id="KW-0238">DNA-binding</keyword>
<keyword id="KW-0347">Helicase</keyword>
<keyword id="KW-0378">Hydrolase</keyword>
<keyword id="KW-0413">Isomerase</keyword>
<keyword id="KW-0547">Nucleotide-binding</keyword>
<keyword id="KW-1185">Reference proteome</keyword>
<gene>
    <name type="primary">uvrD</name>
    <name type="ordered locus">MG244</name>
</gene>
<proteinExistence type="inferred from homology"/>
<organism>
    <name type="scientific">Mycoplasma genitalium (strain ATCC 33530 / DSM 19775 / NCTC 10195 / G37)</name>
    <name type="common">Mycoplasmoides genitalium</name>
    <dbReference type="NCBI Taxonomy" id="243273"/>
    <lineage>
        <taxon>Bacteria</taxon>
        <taxon>Bacillati</taxon>
        <taxon>Mycoplasmatota</taxon>
        <taxon>Mycoplasmoidales</taxon>
        <taxon>Mycoplasmoidaceae</taxon>
        <taxon>Mycoplasmoides</taxon>
    </lineage>
</organism>
<evidence type="ECO:0000250" key="1"/>
<evidence type="ECO:0000255" key="2">
    <source>
        <dbReference type="PROSITE-ProRule" id="PRU00560"/>
    </source>
</evidence>
<evidence type="ECO:0000255" key="3">
    <source>
        <dbReference type="PROSITE-ProRule" id="PRU00617"/>
    </source>
</evidence>
<evidence type="ECO:0000305" key="4"/>
<comment type="function">
    <text evidence="1">Has both ATPase and helicase activities. Unwinds DNA duplexes with 3' to 5' polarity with respect to the bound strand and initiates unwinding most effectively when a single-stranded region is present. Involved in the post-incision events of nucleotide excision repair and methyl-directed mismatch repair (By similarity).</text>
</comment>
<comment type="catalytic activity">
    <reaction>
        <text>Couples ATP hydrolysis with the unwinding of duplex DNA by translocating in the 3'-5' direction.</text>
        <dbReference type="EC" id="5.6.2.4"/>
    </reaction>
</comment>
<comment type="catalytic activity">
    <reaction>
        <text>ATP + H2O = ADP + phosphate + H(+)</text>
        <dbReference type="Rhea" id="RHEA:13065"/>
        <dbReference type="ChEBI" id="CHEBI:15377"/>
        <dbReference type="ChEBI" id="CHEBI:15378"/>
        <dbReference type="ChEBI" id="CHEBI:30616"/>
        <dbReference type="ChEBI" id="CHEBI:43474"/>
        <dbReference type="ChEBI" id="CHEBI:456216"/>
        <dbReference type="EC" id="5.6.2.4"/>
    </reaction>
</comment>
<comment type="similarity">
    <text evidence="4">Belongs to the helicase family. UvrD subfamily.</text>
</comment>
<feature type="chain" id="PRO_0000102076" description="Probable DNA helicase II homolog">
    <location>
        <begin position="1"/>
        <end position="703"/>
    </location>
</feature>
<feature type="domain" description="UvrD-like helicase ATP-binding" evidence="2">
    <location>
        <begin position="1"/>
        <end position="287"/>
    </location>
</feature>
<feature type="domain" description="UvrD-like helicase C-terminal" evidence="3">
    <location>
        <begin position="294"/>
        <end position="542"/>
    </location>
</feature>
<feature type="binding site" evidence="2">
    <location>
        <begin position="23"/>
        <end position="28"/>
    </location>
    <ligand>
        <name>ATP</name>
        <dbReference type="ChEBI" id="CHEBI:30616"/>
    </ligand>
</feature>
<feature type="binding site" evidence="1">
    <location>
        <position position="285"/>
    </location>
    <ligand>
        <name>ATP</name>
        <dbReference type="ChEBI" id="CHEBI:30616"/>
    </ligand>
</feature>
<sequence>MNEQQKQAISCGKGVNVVYSGAGTGKTTIITNRFAYLVNKEKVDPSRILAITFTKKAAKEMQFRILKLIDSSLAEKTNIYTFHSFCNKFLIQTLKKRFIIDDDISYFLKEFLADSKLDINLAKQIIDNFKNTFADFEINKLDQDERLISLCEHSLLNKDEEYSTLKTQLINAFISYEKNKILNNKLDFHDLLIKTCNLLSNDNDLLNQWSEQFQHILVDEFQDTNQIQYELIKMLVTKNKNLFLVGDNNQMIYRWRGAVNGIITALKHDFNVPKSNEFFINQNYRCDQNILAVANQILLKIMAYEKQVKTEKNLLFSTLNSDKKPVYFQAESVENQANWIFNKIKALNQTEKINFKDMAILFRKNRDITTMVELIEADGTIPLPKQKSYFNQLVKLQRVLIAISTRTNLDIKRALQALKIWSNDLKELWKQSDKTNLFDFLKWSELNQKNHSSKLKATGYFNLLIKLAEDQQINLLFTELFKKLKVDQTIENLLWKKLTEFQKDKTEFSLSEFITSLALEFDSIIENSSDTINLLTVHAAKGLEFEAVFIYGMNQGDFPLFLSQNQNDEQHLIDELKLFYVAITRAKRFLFITAVLQINNNSIKPSSFLNYINKSEYLDIATINYVLEQDDDFFDSTKKTDYTKKLRKESLDIIVGDLVTSRYFGKGVVVEVRDKEVLVAFKDTRYGMKWILKNHKSLTKALY</sequence>